<accession>Q04410</accession>
<accession>D6VTD8</accession>
<gene>
    <name type="primary">GRH1</name>
    <name type="ordered locus">YDR517W</name>
</gene>
<comment type="function">
    <text evidence="4 6 7">Involved in the spindle assembly checkpoint. Involved in ER to Golgi vesicle-mediated transport by either facilitating USO1-dependent and -independent tethering or increasing target accuracy of fusion events of COPII-coated vesicles.</text>
</comment>
<comment type="subunit">
    <text evidence="6 7">Homodimer. Interacts with BUG1 (via C-terminus), probably forming a heterooligomer consisting of a GRH1 dimer and a BUG1 dimer. Interacts with COPII coat components SEC23, SEC24, SFB2 and SFB3.</text>
</comment>
<comment type="interaction">
    <interactant intactId="EBI-32083">
        <id>Q04410</id>
    </interactant>
    <interactant intactId="EBI-32271">
        <id>Q12191</id>
        <label>BUG1</label>
    </interactant>
    <organismsDiffer>false</organismsDiffer>
    <experiments>5</experiments>
</comment>
<comment type="interaction">
    <interactant intactId="EBI-32083">
        <id>Q04410</id>
    </interactant>
    <interactant intactId="EBI-16584">
        <id>P15303</id>
        <label>SEC23</label>
    </interactant>
    <organismsDiffer>false</organismsDiffer>
    <experiments>5</experiments>
</comment>
<comment type="interaction">
    <interactant intactId="EBI-32083">
        <id>Q04410</id>
    </interactant>
    <interactant intactId="EBI-16592">
        <id>P40482</id>
        <label>SEC24</label>
    </interactant>
    <organismsDiffer>false</organismsDiffer>
    <experiments>4</experiments>
</comment>
<comment type="subcellular location">
    <subcellularLocation>
        <location>Cytoplasm</location>
    </subcellularLocation>
    <subcellularLocation>
        <location>Golgi apparatus</location>
        <location>cis-Golgi network membrane</location>
        <topology>Peripheral membrane protein</topology>
    </subcellularLocation>
    <text>Localizes to cytoplasm in a punctate pattern. Association with the cis-Golgi requires N-terminal acetylation and is probably mediated via an N-terminal amphipathic helix. The localization to the Golgi is MAK3-dependent and SYS1-independent. Localizes to the Golgi together with BUG1.</text>
</comment>
<comment type="PTM">
    <text evidence="7">N-terminal acetylation; by N-terminal acetyltransferase NatC.</text>
</comment>
<comment type="miscellaneous">
    <text evidence="5">Present with 2730 molecules/cell in log phase SD medium.</text>
</comment>
<name>GRH1_YEAST</name>
<dbReference type="EMBL" id="U33057">
    <property type="protein sequence ID" value="AAB64958.1"/>
    <property type="molecule type" value="Genomic_DNA"/>
</dbReference>
<dbReference type="EMBL" id="BK006938">
    <property type="protein sequence ID" value="DAA12348.1"/>
    <property type="molecule type" value="Genomic_DNA"/>
</dbReference>
<dbReference type="PIR" id="S69574">
    <property type="entry name" value="S69574"/>
</dbReference>
<dbReference type="RefSeq" id="NP_010805.1">
    <property type="nucleotide sequence ID" value="NM_001180825.1"/>
</dbReference>
<dbReference type="PDB" id="6G8Y">
    <property type="method" value="X-ray"/>
    <property type="resolution" value="1.40 A"/>
    <property type="chains" value="A=67-144"/>
</dbReference>
<dbReference type="PDBsum" id="6G8Y"/>
<dbReference type="SMR" id="Q04410"/>
<dbReference type="BioGRID" id="32568">
    <property type="interactions" value="96"/>
</dbReference>
<dbReference type="ComplexPortal" id="CPX-1125">
    <property type="entry name" value="BUG1-GRH1 complex"/>
</dbReference>
<dbReference type="DIP" id="DIP-6613N"/>
<dbReference type="FunCoup" id="Q04410">
    <property type="interactions" value="144"/>
</dbReference>
<dbReference type="IntAct" id="Q04410">
    <property type="interactions" value="26"/>
</dbReference>
<dbReference type="MINT" id="Q04410"/>
<dbReference type="STRING" id="4932.YDR517W"/>
<dbReference type="iPTMnet" id="Q04410"/>
<dbReference type="PaxDb" id="4932-YDR517W"/>
<dbReference type="PeptideAtlas" id="Q04410"/>
<dbReference type="EnsemblFungi" id="YDR517W_mRNA">
    <property type="protein sequence ID" value="YDR517W"/>
    <property type="gene ID" value="YDR517W"/>
</dbReference>
<dbReference type="GeneID" id="852129"/>
<dbReference type="KEGG" id="sce:YDR517W"/>
<dbReference type="AGR" id="SGD:S000002925"/>
<dbReference type="SGD" id="S000002925">
    <property type="gene designation" value="GRH1"/>
</dbReference>
<dbReference type="VEuPathDB" id="FungiDB:YDR517W"/>
<dbReference type="eggNOG" id="KOG3834">
    <property type="taxonomic scope" value="Eukaryota"/>
</dbReference>
<dbReference type="GeneTree" id="ENSGT00390000008686"/>
<dbReference type="HOGENOM" id="CLU_742267_0_0_1"/>
<dbReference type="InParanoid" id="Q04410"/>
<dbReference type="OMA" id="SSTQHIW"/>
<dbReference type="OrthoDB" id="3318at2759"/>
<dbReference type="BioCyc" id="YEAST:G3O-30036-MONOMER"/>
<dbReference type="Reactome" id="R-SCE-162658">
    <property type="pathway name" value="Golgi Cisternae Pericentriolar Stack Reorganization"/>
</dbReference>
<dbReference type="Reactome" id="R-SCE-204005">
    <property type="pathway name" value="COPII-mediated vesicle transport"/>
</dbReference>
<dbReference type="BioGRID-ORCS" id="852129">
    <property type="hits" value="6 hits in 10 CRISPR screens"/>
</dbReference>
<dbReference type="PRO" id="PR:Q04410"/>
<dbReference type="Proteomes" id="UP000002311">
    <property type="component" value="Chromosome IV"/>
</dbReference>
<dbReference type="RNAct" id="Q04410">
    <property type="molecule type" value="protein"/>
</dbReference>
<dbReference type="GO" id="GO:0005801">
    <property type="term" value="C:cis-Golgi network"/>
    <property type="evidence" value="ECO:0000314"/>
    <property type="project" value="SGD"/>
</dbReference>
<dbReference type="GO" id="GO:0033106">
    <property type="term" value="C:cis-Golgi network membrane"/>
    <property type="evidence" value="ECO:0000314"/>
    <property type="project" value="ComplexPortal"/>
</dbReference>
<dbReference type="GO" id="GO:0106103">
    <property type="term" value="C:COPII vesicles tethering complex"/>
    <property type="evidence" value="ECO:0000353"/>
    <property type="project" value="ComplexPortal"/>
</dbReference>
<dbReference type="GO" id="GO:0005737">
    <property type="term" value="C:cytoplasm"/>
    <property type="evidence" value="ECO:0000314"/>
    <property type="project" value="SGD"/>
</dbReference>
<dbReference type="GO" id="GO:0005829">
    <property type="term" value="C:cytosol"/>
    <property type="evidence" value="ECO:0007005"/>
    <property type="project" value="SGD"/>
</dbReference>
<dbReference type="GO" id="GO:0005794">
    <property type="term" value="C:Golgi apparatus"/>
    <property type="evidence" value="ECO:0000318"/>
    <property type="project" value="GO_Central"/>
</dbReference>
<dbReference type="GO" id="GO:0000139">
    <property type="term" value="C:Golgi membrane"/>
    <property type="evidence" value="ECO:0000314"/>
    <property type="project" value="SGD"/>
</dbReference>
<dbReference type="GO" id="GO:0044877">
    <property type="term" value="F:protein-containing complex binding"/>
    <property type="evidence" value="ECO:0000314"/>
    <property type="project" value="SGD"/>
</dbReference>
<dbReference type="GO" id="GO:1990000">
    <property type="term" value="P:amyloid fibril formation"/>
    <property type="evidence" value="ECO:0000269"/>
    <property type="project" value="DisProt"/>
</dbReference>
<dbReference type="GO" id="GO:0009267">
    <property type="term" value="P:cellular response to starvation"/>
    <property type="evidence" value="ECO:0000315"/>
    <property type="project" value="SGD"/>
</dbReference>
<dbReference type="GO" id="GO:0006888">
    <property type="term" value="P:endoplasmic reticulum to Golgi vesicle-mediated transport"/>
    <property type="evidence" value="ECO:0000315"/>
    <property type="project" value="SGD"/>
</dbReference>
<dbReference type="GO" id="GO:0007030">
    <property type="term" value="P:Golgi organization"/>
    <property type="evidence" value="ECO:0000318"/>
    <property type="project" value="GO_Central"/>
</dbReference>
<dbReference type="GO" id="GO:0009306">
    <property type="term" value="P:protein secretion"/>
    <property type="evidence" value="ECO:0000315"/>
    <property type="project" value="SGD"/>
</dbReference>
<dbReference type="DisProt" id="DP02544"/>
<dbReference type="FunFam" id="2.30.42.10:FF:000183">
    <property type="entry name" value="Golgi reassembly-stacking protein 2"/>
    <property type="match status" value="1"/>
</dbReference>
<dbReference type="Gene3D" id="2.30.42.10">
    <property type="match status" value="2"/>
</dbReference>
<dbReference type="InterPro" id="IPR007583">
    <property type="entry name" value="GRASP55_65"/>
</dbReference>
<dbReference type="InterPro" id="IPR024958">
    <property type="entry name" value="GRASP_PDZ"/>
</dbReference>
<dbReference type="InterPro" id="IPR036034">
    <property type="entry name" value="PDZ_sf"/>
</dbReference>
<dbReference type="PANTHER" id="PTHR12893">
    <property type="entry name" value="GOLGI REASSEMBLY STACKING PROTEIN GRASP"/>
    <property type="match status" value="1"/>
</dbReference>
<dbReference type="PANTHER" id="PTHR12893:SF0">
    <property type="entry name" value="GRASP65"/>
    <property type="match status" value="1"/>
</dbReference>
<dbReference type="Pfam" id="PF04495">
    <property type="entry name" value="GRASP55_65"/>
    <property type="match status" value="1"/>
</dbReference>
<dbReference type="PROSITE" id="PS51865">
    <property type="entry name" value="PDZ_GRASP"/>
    <property type="match status" value="2"/>
</dbReference>
<proteinExistence type="evidence at protein level"/>
<protein>
    <recommendedName>
        <fullName>GRASP65 homolog protein 1</fullName>
    </recommendedName>
</protein>
<organism>
    <name type="scientific">Saccharomyces cerevisiae (strain ATCC 204508 / S288c)</name>
    <name type="common">Baker's yeast</name>
    <dbReference type="NCBI Taxonomy" id="559292"/>
    <lineage>
        <taxon>Eukaryota</taxon>
        <taxon>Fungi</taxon>
        <taxon>Dikarya</taxon>
        <taxon>Ascomycota</taxon>
        <taxon>Saccharomycotina</taxon>
        <taxon>Saccharomycetes</taxon>
        <taxon>Saccharomycetales</taxon>
        <taxon>Saccharomycetaceae</taxon>
        <taxon>Saccharomyces</taxon>
    </lineage>
</organism>
<sequence length="372" mass="41119">MFRIAKNLVRTFEQSVQDTLALSQDSSNLDAFFQSIPPNLLSAQLESPVDAVSEGVKHTNVNETLSGLRIVWVDEMQFQLQSFFDYIVGFNDDPVPVVSNQHGFSYPDYRRITSIFNEHCGRTLKVNIWSAKGGTFRDEYISIISKESDDLDDVSLNHDERRPSSGEAHQFQALGFKVQWTPLIASTFTYHILNVNIPDGPAQSAGLIPDEDYIIGCQDGLLATGGETLLQDIVRSRANYDLVLYVYNKVSDCVRPITVHIGPDGRLGCNVGYGFLHRIPTVKHCPQQAQQQGQDDNPVPVPVPVESETAFVPSAFTAPPVPTKKKSKNKKGTQPLAMDDYFNEGRDKSSTAAKSAESDILAPPPQKQSSSD</sequence>
<feature type="chain" id="PRO_0000270975" description="GRASP65 homolog protein 1">
    <location>
        <begin position="1"/>
        <end position="372"/>
    </location>
</feature>
<feature type="domain" description="PDZ GRASP-type 1" evidence="1">
    <location>
        <begin position="66"/>
        <end position="183"/>
    </location>
</feature>
<feature type="domain" description="PDZ GRASP-type 2" evidence="1">
    <location>
        <begin position="188"/>
        <end position="276"/>
    </location>
</feature>
<feature type="region of interest" description="GRASP" evidence="2">
    <location>
        <begin position="66"/>
        <end position="292"/>
    </location>
</feature>
<feature type="region of interest" description="Disordered" evidence="3">
    <location>
        <begin position="312"/>
        <end position="372"/>
    </location>
</feature>
<feature type="modified residue" description="N-acetylmethionine" evidence="7">
    <location>
        <position position="1"/>
    </location>
</feature>
<feature type="modified residue" description="Phosphoserine" evidence="10 11 12">
    <location>
        <position position="155"/>
    </location>
</feature>
<feature type="mutagenesis site" description="Abolishes acetylation and association with cis-Golgi." evidence="7">
    <original>F</original>
    <variation>A</variation>
    <location>
        <position position="2"/>
    </location>
</feature>
<feature type="turn" evidence="13">
    <location>
        <begin position="75"/>
        <end position="79"/>
    </location>
</feature>
<feature type="strand" evidence="13">
    <location>
        <begin position="85"/>
        <end position="90"/>
    </location>
</feature>
<feature type="strand" evidence="13">
    <location>
        <begin position="97"/>
        <end position="99"/>
    </location>
</feature>
<feature type="strand" evidence="13">
    <location>
        <begin position="105"/>
        <end position="107"/>
    </location>
</feature>
<feature type="helix" evidence="13">
    <location>
        <begin position="109"/>
        <end position="118"/>
    </location>
</feature>
<feature type="turn" evidence="13">
    <location>
        <begin position="119"/>
        <end position="121"/>
    </location>
</feature>
<feature type="strand" evidence="13">
    <location>
        <begin position="122"/>
        <end position="130"/>
    </location>
</feature>
<feature type="turn" evidence="13">
    <location>
        <begin position="131"/>
        <end position="134"/>
    </location>
</feature>
<feature type="strand" evidence="13">
    <location>
        <begin position="135"/>
        <end position="142"/>
    </location>
</feature>
<reference evidence="9" key="1">
    <citation type="journal article" date="1997" name="Nature">
        <title>The nucleotide sequence of Saccharomyces cerevisiae chromosome IV.</title>
        <authorList>
            <person name="Jacq C."/>
            <person name="Alt-Moerbe J."/>
            <person name="Andre B."/>
            <person name="Arnold W."/>
            <person name="Bahr A."/>
            <person name="Ballesta J.P.G."/>
            <person name="Bargues M."/>
            <person name="Baron L."/>
            <person name="Becker A."/>
            <person name="Biteau N."/>
            <person name="Bloecker H."/>
            <person name="Blugeon C."/>
            <person name="Boskovic J."/>
            <person name="Brandt P."/>
            <person name="Brueckner M."/>
            <person name="Buitrago M.J."/>
            <person name="Coster F."/>
            <person name="Delaveau T."/>
            <person name="del Rey F."/>
            <person name="Dujon B."/>
            <person name="Eide L.G."/>
            <person name="Garcia-Cantalejo J.M."/>
            <person name="Goffeau A."/>
            <person name="Gomez-Peris A."/>
            <person name="Granotier C."/>
            <person name="Hanemann V."/>
            <person name="Hankeln T."/>
            <person name="Hoheisel J.D."/>
            <person name="Jaeger W."/>
            <person name="Jimenez A."/>
            <person name="Jonniaux J.-L."/>
            <person name="Kraemer C."/>
            <person name="Kuester H."/>
            <person name="Laamanen P."/>
            <person name="Legros Y."/>
            <person name="Louis E.J."/>
            <person name="Moeller-Rieker S."/>
            <person name="Monnet A."/>
            <person name="Moro M."/>
            <person name="Mueller-Auer S."/>
            <person name="Nussbaumer B."/>
            <person name="Paricio N."/>
            <person name="Paulin L."/>
            <person name="Perea J."/>
            <person name="Perez-Alonso M."/>
            <person name="Perez-Ortin J.E."/>
            <person name="Pohl T.M."/>
            <person name="Prydz H."/>
            <person name="Purnelle B."/>
            <person name="Rasmussen S.W."/>
            <person name="Remacha M.A."/>
            <person name="Revuelta J.L."/>
            <person name="Rieger M."/>
            <person name="Salom D."/>
            <person name="Saluz H.P."/>
            <person name="Saiz J.E."/>
            <person name="Saren A.-M."/>
            <person name="Schaefer M."/>
            <person name="Scharfe M."/>
            <person name="Schmidt E.R."/>
            <person name="Schneider C."/>
            <person name="Scholler P."/>
            <person name="Schwarz S."/>
            <person name="Soler-Mira A."/>
            <person name="Urrestarazu L.A."/>
            <person name="Verhasselt P."/>
            <person name="Vissers S."/>
            <person name="Voet M."/>
            <person name="Volckaert G."/>
            <person name="Wagner G."/>
            <person name="Wambutt R."/>
            <person name="Wedler E."/>
            <person name="Wedler H."/>
            <person name="Woelfl S."/>
            <person name="Harris D.E."/>
            <person name="Bowman S."/>
            <person name="Brown D."/>
            <person name="Churcher C.M."/>
            <person name="Connor R."/>
            <person name="Dedman K."/>
            <person name="Gentles S."/>
            <person name="Hamlin N."/>
            <person name="Hunt S."/>
            <person name="Jones L."/>
            <person name="McDonald S."/>
            <person name="Murphy L.D."/>
            <person name="Niblett D."/>
            <person name="Odell C."/>
            <person name="Oliver K."/>
            <person name="Rajandream M.A."/>
            <person name="Richards C."/>
            <person name="Shore L."/>
            <person name="Walsh S.V."/>
            <person name="Barrell B.G."/>
            <person name="Dietrich F.S."/>
            <person name="Mulligan J.T."/>
            <person name="Allen E."/>
            <person name="Araujo R."/>
            <person name="Aviles E."/>
            <person name="Berno A."/>
            <person name="Carpenter J."/>
            <person name="Chen E."/>
            <person name="Cherry J.M."/>
            <person name="Chung E."/>
            <person name="Duncan M."/>
            <person name="Hunicke-Smith S."/>
            <person name="Hyman R.W."/>
            <person name="Komp C."/>
            <person name="Lashkari D."/>
            <person name="Lew H."/>
            <person name="Lin D."/>
            <person name="Mosedale D."/>
            <person name="Nakahara K."/>
            <person name="Namath A."/>
            <person name="Oefner P."/>
            <person name="Oh C."/>
            <person name="Petel F.X."/>
            <person name="Roberts D."/>
            <person name="Schramm S."/>
            <person name="Schroeder M."/>
            <person name="Shogren T."/>
            <person name="Shroff N."/>
            <person name="Winant A."/>
            <person name="Yelton M.A."/>
            <person name="Botstein D."/>
            <person name="Davis R.W."/>
            <person name="Johnston M."/>
            <person name="Andrews S."/>
            <person name="Brinkman R."/>
            <person name="Cooper J."/>
            <person name="Ding H."/>
            <person name="Du Z."/>
            <person name="Favello A."/>
            <person name="Fulton L."/>
            <person name="Gattung S."/>
            <person name="Greco T."/>
            <person name="Hallsworth K."/>
            <person name="Hawkins J."/>
            <person name="Hillier L.W."/>
            <person name="Jier M."/>
            <person name="Johnson D."/>
            <person name="Johnston L."/>
            <person name="Kirsten J."/>
            <person name="Kucaba T."/>
            <person name="Langston Y."/>
            <person name="Latreille P."/>
            <person name="Le T."/>
            <person name="Mardis E."/>
            <person name="Menezes S."/>
            <person name="Miller N."/>
            <person name="Nhan M."/>
            <person name="Pauley A."/>
            <person name="Peluso D."/>
            <person name="Rifkin L."/>
            <person name="Riles L."/>
            <person name="Taich A."/>
            <person name="Trevaskis E."/>
            <person name="Vignati D."/>
            <person name="Wilcox L."/>
            <person name="Wohldman P."/>
            <person name="Vaudin M."/>
            <person name="Wilson R."/>
            <person name="Waterston R."/>
            <person name="Albermann K."/>
            <person name="Hani J."/>
            <person name="Heumann K."/>
            <person name="Kleine K."/>
            <person name="Mewes H.-W."/>
            <person name="Zollner A."/>
            <person name="Zaccaria P."/>
        </authorList>
    </citation>
    <scope>NUCLEOTIDE SEQUENCE [LARGE SCALE GENOMIC DNA]</scope>
    <source>
        <strain>ATCC 204508 / S288c</strain>
    </source>
</reference>
<reference key="2">
    <citation type="journal article" date="2014" name="G3 (Bethesda)">
        <title>The reference genome sequence of Saccharomyces cerevisiae: Then and now.</title>
        <authorList>
            <person name="Engel S.R."/>
            <person name="Dietrich F.S."/>
            <person name="Fisk D.G."/>
            <person name="Binkley G."/>
            <person name="Balakrishnan R."/>
            <person name="Costanzo M.C."/>
            <person name="Dwight S.S."/>
            <person name="Hitz B.C."/>
            <person name="Karra K."/>
            <person name="Nash R.S."/>
            <person name="Weng S."/>
            <person name="Wong E.D."/>
            <person name="Lloyd P."/>
            <person name="Skrzypek M.S."/>
            <person name="Miyasato S.R."/>
            <person name="Simison M."/>
            <person name="Cherry J.M."/>
        </authorList>
    </citation>
    <scope>GENOME REANNOTATION</scope>
    <source>
        <strain>ATCC 204508 / S288c</strain>
    </source>
</reference>
<reference evidence="8" key="3">
    <citation type="journal article" date="1999" name="Science">
        <title>Genetic selection of peptide inhibitors of biological pathways.</title>
        <authorList>
            <person name="Norman T.C."/>
            <person name="Smith D.L."/>
            <person name="Sorger P.K."/>
            <person name="Drees B.L."/>
            <person name="O'Rourke S.M."/>
            <person name="Hughes T.R."/>
            <person name="Roberts C.J."/>
            <person name="Friend S.H."/>
            <person name="Fields S."/>
            <person name="Murray A.W."/>
        </authorList>
    </citation>
    <scope>FUNCTION</scope>
    <scope>SUBCELLULAR LOCATION</scope>
</reference>
<reference evidence="8" key="4">
    <citation type="journal article" date="2003" name="Nature">
        <title>Global analysis of protein localization in budding yeast.</title>
        <authorList>
            <person name="Huh W.-K."/>
            <person name="Falvo J.V."/>
            <person name="Gerke L.C."/>
            <person name="Carroll A.S."/>
            <person name="Howson R.W."/>
            <person name="Weissman J.S."/>
            <person name="O'Shea E.K."/>
        </authorList>
    </citation>
    <scope>SUBCELLULAR LOCATION [LARGE SCALE ANALYSIS]</scope>
</reference>
<reference evidence="8" key="5">
    <citation type="journal article" date="2003" name="Nature">
        <title>Global analysis of protein expression in yeast.</title>
        <authorList>
            <person name="Ghaemmaghami S."/>
            <person name="Huh W.-K."/>
            <person name="Bower K."/>
            <person name="Howson R.W."/>
            <person name="Belle A."/>
            <person name="Dephoure N."/>
            <person name="O'Shea E.K."/>
            <person name="Weissman J.S."/>
        </authorList>
    </citation>
    <scope>LEVEL OF PROTEIN EXPRESSION [LARGE SCALE ANALYSIS]</scope>
</reference>
<reference evidence="8" key="6">
    <citation type="journal article" date="2005" name="Cell">
        <title>Exploration of the function and organization of the yeast early secretory pathway through an epistatic miniarray profile.</title>
        <authorList>
            <person name="Schuldiner M."/>
            <person name="Collins S.R."/>
            <person name="Thompson N.J."/>
            <person name="Denic V."/>
            <person name="Bhamidipati A."/>
            <person name="Punna T."/>
            <person name="Ihmels J."/>
            <person name="Andrews B."/>
            <person name="Boone C."/>
            <person name="Greenblatt J.F."/>
            <person name="Weissman J.S."/>
            <person name="Krogan N.J."/>
        </authorList>
    </citation>
    <scope>FUNCTION</scope>
    <scope>INTERACTION WITH BUG1; SEC23; SEC24 AND SFB2</scope>
</reference>
<reference key="7">
    <citation type="journal article" date="2007" name="J. Cell Biol.">
        <title>The yeast orthologue of GRASP65 forms a complex with a coiled-coil protein that contributes to ER to Golgi traffic.</title>
        <authorList>
            <person name="Behnia R."/>
            <person name="Barr F.A."/>
            <person name="Flanagan J.J."/>
            <person name="Barlowe C."/>
            <person name="Munro S."/>
        </authorList>
    </citation>
    <scope>FUNCTION</scope>
    <scope>INTERACTION WITH BUG1; SEC23; SEC24; SFB2 AND SBF3</scope>
    <scope>SUBCELLULAR LOCATION</scope>
    <scope>ACETYLATION AT MET-1</scope>
    <scope>MUTAGENESIS OF PHE-2</scope>
</reference>
<reference key="8">
    <citation type="journal article" date="2007" name="J. Proteome Res.">
        <title>Large-scale phosphorylation analysis of alpha-factor-arrested Saccharomyces cerevisiae.</title>
        <authorList>
            <person name="Li X."/>
            <person name="Gerber S.A."/>
            <person name="Rudner A.D."/>
            <person name="Beausoleil S.A."/>
            <person name="Haas W."/>
            <person name="Villen J."/>
            <person name="Elias J.E."/>
            <person name="Gygi S.P."/>
        </authorList>
    </citation>
    <scope>PHOSPHORYLATION [LARGE SCALE ANALYSIS] AT SER-155</scope>
    <scope>IDENTIFICATION BY MASS SPECTROMETRY [LARGE SCALE ANALYSIS]</scope>
    <source>
        <strain>ADR376</strain>
    </source>
</reference>
<reference key="9">
    <citation type="journal article" date="2008" name="Mol. Cell. Proteomics">
        <title>A multidimensional chromatography technology for in-depth phosphoproteome analysis.</title>
        <authorList>
            <person name="Albuquerque C.P."/>
            <person name="Smolka M.B."/>
            <person name="Payne S.H."/>
            <person name="Bafna V."/>
            <person name="Eng J."/>
            <person name="Zhou H."/>
        </authorList>
    </citation>
    <scope>PHOSPHORYLATION [LARGE SCALE ANALYSIS] AT SER-155</scope>
    <scope>IDENTIFICATION BY MASS SPECTROMETRY [LARGE SCALE ANALYSIS]</scope>
</reference>
<reference key="10">
    <citation type="journal article" date="2009" name="Science">
        <title>Global analysis of Cdk1 substrate phosphorylation sites provides insights into evolution.</title>
        <authorList>
            <person name="Holt L.J."/>
            <person name="Tuch B.B."/>
            <person name="Villen J."/>
            <person name="Johnson A.D."/>
            <person name="Gygi S.P."/>
            <person name="Morgan D.O."/>
        </authorList>
    </citation>
    <scope>PHOSPHORYLATION [LARGE SCALE ANALYSIS] AT SER-155</scope>
    <scope>IDENTIFICATION BY MASS SPECTROMETRY [LARGE SCALE ANALYSIS]</scope>
</reference>
<evidence type="ECO:0000255" key="1">
    <source>
        <dbReference type="PROSITE-ProRule" id="PRU01212"/>
    </source>
</evidence>
<evidence type="ECO:0000255" key="2">
    <source>
        <dbReference type="PROSITE-ProRule" id="PRU01214"/>
    </source>
</evidence>
<evidence type="ECO:0000256" key="3">
    <source>
        <dbReference type="SAM" id="MobiDB-lite"/>
    </source>
</evidence>
<evidence type="ECO:0000269" key="4">
    <source>
    </source>
</evidence>
<evidence type="ECO:0000269" key="5">
    <source>
    </source>
</evidence>
<evidence type="ECO:0000269" key="6">
    <source>
    </source>
</evidence>
<evidence type="ECO:0000269" key="7">
    <source>
    </source>
</evidence>
<evidence type="ECO:0000305" key="8"/>
<evidence type="ECO:0000312" key="9">
    <source>
        <dbReference type="EMBL" id="AAB64958.1"/>
    </source>
</evidence>
<evidence type="ECO:0007744" key="10">
    <source>
    </source>
</evidence>
<evidence type="ECO:0007744" key="11">
    <source>
    </source>
</evidence>
<evidence type="ECO:0007744" key="12">
    <source>
    </source>
</evidence>
<evidence type="ECO:0007829" key="13">
    <source>
        <dbReference type="PDB" id="6G8Y"/>
    </source>
</evidence>
<keyword id="KW-0002">3D-structure</keyword>
<keyword id="KW-0007">Acetylation</keyword>
<keyword id="KW-0963">Cytoplasm</keyword>
<keyword id="KW-0931">ER-Golgi transport</keyword>
<keyword id="KW-0333">Golgi apparatus</keyword>
<keyword id="KW-0472">Membrane</keyword>
<keyword id="KW-0597">Phosphoprotein</keyword>
<keyword id="KW-1185">Reference proteome</keyword>
<keyword id="KW-0677">Repeat</keyword>
<keyword id="KW-0813">Transport</keyword>